<sequence>MFAIAILAAGKGTRMRSSYPKVLQQLAGRSLIKRVIKSCEDLKPDRFLVIVGHQAEAVQDHLKELSHLEYINQVPQKGTGHAIQQLLPVLDNFIGDLLVLNGDVPLLKAETLQKLIAKHKTSKASVTFLSARLSNPKGYGRVFSNNQDEVDRIVEDADCSREEKSNKLTNAGIYLFKWDLLKNILPKLSSTNKQSELYLTDAISQLPTAIHLEVDNIDEVSGVNDRAQLANCENLIQQSLRNHWMSKGVSFIDPESCTISEESQFGIDIVIEPQTHLRGNCFIGNNCRLGPSTYIEDSRLGENVNVMQSTLNNCQVASHVKIGPFAHLRPETNVSSNCRIGNFVEIKKSELGQGTKVNHLSYIGDSHVGCHVNIGAGTITANFDGFRKNETVIGDHTKTGANSVLIAPINIGNRVTVGAGSTLTKNVPDGSLAIERSKQNIKENWKTREETNQ</sequence>
<name>GLMU_PROM4</name>
<dbReference type="EC" id="2.7.7.23" evidence="1"/>
<dbReference type="EC" id="2.3.1.157" evidence="1"/>
<dbReference type="EMBL" id="CP000878">
    <property type="protein sequence ID" value="ABX08970.1"/>
    <property type="molecule type" value="Genomic_DNA"/>
</dbReference>
<dbReference type="RefSeq" id="WP_012195591.1">
    <property type="nucleotide sequence ID" value="NC_009976.1"/>
</dbReference>
<dbReference type="SMR" id="A9BAV8"/>
<dbReference type="STRING" id="93059.P9211_10391"/>
<dbReference type="KEGG" id="pmj:P9211_10391"/>
<dbReference type="eggNOG" id="COG1207">
    <property type="taxonomic scope" value="Bacteria"/>
</dbReference>
<dbReference type="HOGENOM" id="CLU_029499_15_2_3"/>
<dbReference type="OrthoDB" id="9775031at2"/>
<dbReference type="UniPathway" id="UPA00113">
    <property type="reaction ID" value="UER00532"/>
</dbReference>
<dbReference type="UniPathway" id="UPA00113">
    <property type="reaction ID" value="UER00533"/>
</dbReference>
<dbReference type="UniPathway" id="UPA00973"/>
<dbReference type="Proteomes" id="UP000000788">
    <property type="component" value="Chromosome"/>
</dbReference>
<dbReference type="GO" id="GO:0031470">
    <property type="term" value="C:carboxysome"/>
    <property type="evidence" value="ECO:0007669"/>
    <property type="project" value="UniProtKB-ARBA"/>
</dbReference>
<dbReference type="GO" id="GO:0005737">
    <property type="term" value="C:cytoplasm"/>
    <property type="evidence" value="ECO:0007669"/>
    <property type="project" value="UniProtKB-SubCell"/>
</dbReference>
<dbReference type="GO" id="GO:0016020">
    <property type="term" value="C:membrane"/>
    <property type="evidence" value="ECO:0007669"/>
    <property type="project" value="GOC"/>
</dbReference>
<dbReference type="GO" id="GO:0019134">
    <property type="term" value="F:glucosamine-1-phosphate N-acetyltransferase activity"/>
    <property type="evidence" value="ECO:0007669"/>
    <property type="project" value="UniProtKB-UniRule"/>
</dbReference>
<dbReference type="GO" id="GO:0000287">
    <property type="term" value="F:magnesium ion binding"/>
    <property type="evidence" value="ECO:0007669"/>
    <property type="project" value="UniProtKB-UniRule"/>
</dbReference>
<dbReference type="GO" id="GO:0043886">
    <property type="term" value="F:structural constituent of carboxysome shell"/>
    <property type="evidence" value="ECO:0007669"/>
    <property type="project" value="UniProtKB-ARBA"/>
</dbReference>
<dbReference type="GO" id="GO:0003977">
    <property type="term" value="F:UDP-N-acetylglucosamine diphosphorylase activity"/>
    <property type="evidence" value="ECO:0007669"/>
    <property type="project" value="UniProtKB-UniRule"/>
</dbReference>
<dbReference type="GO" id="GO:0000902">
    <property type="term" value="P:cell morphogenesis"/>
    <property type="evidence" value="ECO:0007669"/>
    <property type="project" value="UniProtKB-UniRule"/>
</dbReference>
<dbReference type="GO" id="GO:0071555">
    <property type="term" value="P:cell wall organization"/>
    <property type="evidence" value="ECO:0007669"/>
    <property type="project" value="UniProtKB-KW"/>
</dbReference>
<dbReference type="GO" id="GO:0009245">
    <property type="term" value="P:lipid A biosynthetic process"/>
    <property type="evidence" value="ECO:0007669"/>
    <property type="project" value="UniProtKB-UniRule"/>
</dbReference>
<dbReference type="GO" id="GO:0009252">
    <property type="term" value="P:peptidoglycan biosynthetic process"/>
    <property type="evidence" value="ECO:0007669"/>
    <property type="project" value="UniProtKB-UniRule"/>
</dbReference>
<dbReference type="GO" id="GO:0008360">
    <property type="term" value="P:regulation of cell shape"/>
    <property type="evidence" value="ECO:0007669"/>
    <property type="project" value="UniProtKB-KW"/>
</dbReference>
<dbReference type="GO" id="GO:0006048">
    <property type="term" value="P:UDP-N-acetylglucosamine biosynthetic process"/>
    <property type="evidence" value="ECO:0007669"/>
    <property type="project" value="UniProtKB-UniPathway"/>
</dbReference>
<dbReference type="CDD" id="cd02540">
    <property type="entry name" value="GT2_GlmU_N_bac"/>
    <property type="match status" value="1"/>
</dbReference>
<dbReference type="CDD" id="cd03353">
    <property type="entry name" value="LbH_GlmU_C"/>
    <property type="match status" value="1"/>
</dbReference>
<dbReference type="Gene3D" id="2.160.10.10">
    <property type="entry name" value="Hexapeptide repeat proteins"/>
    <property type="match status" value="1"/>
</dbReference>
<dbReference type="Gene3D" id="3.90.550.10">
    <property type="entry name" value="Spore Coat Polysaccharide Biosynthesis Protein SpsA, Chain A"/>
    <property type="match status" value="1"/>
</dbReference>
<dbReference type="HAMAP" id="MF_01631">
    <property type="entry name" value="GlmU"/>
    <property type="match status" value="1"/>
</dbReference>
<dbReference type="InterPro" id="IPR005882">
    <property type="entry name" value="Bifunctional_GlmU"/>
</dbReference>
<dbReference type="InterPro" id="IPR050065">
    <property type="entry name" value="GlmU-like"/>
</dbReference>
<dbReference type="InterPro" id="IPR038009">
    <property type="entry name" value="GlmU_C_LbH"/>
</dbReference>
<dbReference type="InterPro" id="IPR001451">
    <property type="entry name" value="Hexapep"/>
</dbReference>
<dbReference type="InterPro" id="IPR005835">
    <property type="entry name" value="NTP_transferase_dom"/>
</dbReference>
<dbReference type="InterPro" id="IPR029044">
    <property type="entry name" value="Nucleotide-diphossugar_trans"/>
</dbReference>
<dbReference type="InterPro" id="IPR011004">
    <property type="entry name" value="Trimer_LpxA-like_sf"/>
</dbReference>
<dbReference type="NCBIfam" id="TIGR01173">
    <property type="entry name" value="glmU"/>
    <property type="match status" value="1"/>
</dbReference>
<dbReference type="NCBIfam" id="NF010940">
    <property type="entry name" value="PRK14360.1"/>
    <property type="match status" value="1"/>
</dbReference>
<dbReference type="PANTHER" id="PTHR43584:SF3">
    <property type="entry name" value="BIFUNCTIONAL PROTEIN GLMU"/>
    <property type="match status" value="1"/>
</dbReference>
<dbReference type="PANTHER" id="PTHR43584">
    <property type="entry name" value="NUCLEOTIDYL TRANSFERASE"/>
    <property type="match status" value="1"/>
</dbReference>
<dbReference type="Pfam" id="PF00132">
    <property type="entry name" value="Hexapep"/>
    <property type="match status" value="1"/>
</dbReference>
<dbReference type="Pfam" id="PF00483">
    <property type="entry name" value="NTP_transferase"/>
    <property type="match status" value="1"/>
</dbReference>
<dbReference type="SUPFAM" id="SSF53448">
    <property type="entry name" value="Nucleotide-diphospho-sugar transferases"/>
    <property type="match status" value="1"/>
</dbReference>
<dbReference type="SUPFAM" id="SSF51161">
    <property type="entry name" value="Trimeric LpxA-like enzymes"/>
    <property type="match status" value="1"/>
</dbReference>
<accession>A9BAV8</accession>
<gene>
    <name evidence="1" type="primary">glmU</name>
    <name type="ordered locus">P9211_10391</name>
</gene>
<evidence type="ECO:0000255" key="1">
    <source>
        <dbReference type="HAMAP-Rule" id="MF_01631"/>
    </source>
</evidence>
<protein>
    <recommendedName>
        <fullName evidence="1">Bifunctional protein GlmU</fullName>
    </recommendedName>
    <domain>
        <recommendedName>
            <fullName evidence="1">UDP-N-acetylglucosamine pyrophosphorylase</fullName>
            <ecNumber evidence="1">2.7.7.23</ecNumber>
        </recommendedName>
        <alternativeName>
            <fullName evidence="1">N-acetylglucosamine-1-phosphate uridyltransferase</fullName>
        </alternativeName>
    </domain>
    <domain>
        <recommendedName>
            <fullName evidence="1">Glucosamine-1-phosphate N-acetyltransferase</fullName>
            <ecNumber evidence="1">2.3.1.157</ecNumber>
        </recommendedName>
    </domain>
</protein>
<proteinExistence type="inferred from homology"/>
<feature type="chain" id="PRO_1000186471" description="Bifunctional protein GlmU">
    <location>
        <begin position="1"/>
        <end position="453"/>
    </location>
</feature>
<feature type="region of interest" description="Pyrophosphorylase" evidence="1">
    <location>
        <begin position="1"/>
        <end position="226"/>
    </location>
</feature>
<feature type="region of interest" description="Linker" evidence="1">
    <location>
        <begin position="227"/>
        <end position="247"/>
    </location>
</feature>
<feature type="region of interest" description="N-acetyltransferase" evidence="1">
    <location>
        <begin position="248"/>
        <end position="453"/>
    </location>
</feature>
<feature type="active site" description="Proton acceptor" evidence="1">
    <location>
        <position position="359"/>
    </location>
</feature>
<feature type="binding site" evidence="1">
    <location>
        <begin position="7"/>
        <end position="10"/>
    </location>
    <ligand>
        <name>UDP-N-acetyl-alpha-D-glucosamine</name>
        <dbReference type="ChEBI" id="CHEBI:57705"/>
    </ligand>
</feature>
<feature type="binding site" evidence="1">
    <location>
        <position position="21"/>
    </location>
    <ligand>
        <name>UDP-N-acetyl-alpha-D-glucosamine</name>
        <dbReference type="ChEBI" id="CHEBI:57705"/>
    </ligand>
</feature>
<feature type="binding site" evidence="1">
    <location>
        <position position="73"/>
    </location>
    <ligand>
        <name>UDP-N-acetyl-alpha-D-glucosamine</name>
        <dbReference type="ChEBI" id="CHEBI:57705"/>
    </ligand>
</feature>
<feature type="binding site" evidence="1">
    <location>
        <begin position="78"/>
        <end position="79"/>
    </location>
    <ligand>
        <name>UDP-N-acetyl-alpha-D-glucosamine</name>
        <dbReference type="ChEBI" id="CHEBI:57705"/>
    </ligand>
</feature>
<feature type="binding site" evidence="1">
    <location>
        <position position="103"/>
    </location>
    <ligand>
        <name>Mg(2+)</name>
        <dbReference type="ChEBI" id="CHEBI:18420"/>
    </ligand>
</feature>
<feature type="binding site" evidence="1">
    <location>
        <position position="140"/>
    </location>
    <ligand>
        <name>UDP-N-acetyl-alpha-D-glucosamine</name>
        <dbReference type="ChEBI" id="CHEBI:57705"/>
    </ligand>
</feature>
<feature type="binding site" evidence="1">
    <location>
        <position position="155"/>
    </location>
    <ligand>
        <name>UDP-N-acetyl-alpha-D-glucosamine</name>
        <dbReference type="ChEBI" id="CHEBI:57705"/>
    </ligand>
</feature>
<feature type="binding site" evidence="1">
    <location>
        <position position="170"/>
    </location>
    <ligand>
        <name>UDP-N-acetyl-alpha-D-glucosamine</name>
        <dbReference type="ChEBI" id="CHEBI:57705"/>
    </ligand>
</feature>
<feature type="binding site" evidence="1">
    <location>
        <position position="224"/>
    </location>
    <ligand>
        <name>Mg(2+)</name>
        <dbReference type="ChEBI" id="CHEBI:18420"/>
    </ligand>
</feature>
<feature type="binding site" evidence="1">
    <location>
        <position position="224"/>
    </location>
    <ligand>
        <name>UDP-N-acetyl-alpha-D-glucosamine</name>
        <dbReference type="ChEBI" id="CHEBI:57705"/>
    </ligand>
</feature>
<feature type="binding site" evidence="1">
    <location>
        <position position="329"/>
    </location>
    <ligand>
        <name>UDP-N-acetyl-alpha-D-glucosamine</name>
        <dbReference type="ChEBI" id="CHEBI:57705"/>
    </ligand>
</feature>
<feature type="binding site" evidence="1">
    <location>
        <position position="347"/>
    </location>
    <ligand>
        <name>UDP-N-acetyl-alpha-D-glucosamine</name>
        <dbReference type="ChEBI" id="CHEBI:57705"/>
    </ligand>
</feature>
<feature type="binding site" evidence="1">
    <location>
        <position position="362"/>
    </location>
    <ligand>
        <name>UDP-N-acetyl-alpha-D-glucosamine</name>
        <dbReference type="ChEBI" id="CHEBI:57705"/>
    </ligand>
</feature>
<feature type="binding site" evidence="1">
    <location>
        <position position="373"/>
    </location>
    <ligand>
        <name>UDP-N-acetyl-alpha-D-glucosamine</name>
        <dbReference type="ChEBI" id="CHEBI:57705"/>
    </ligand>
</feature>
<feature type="binding site" evidence="1">
    <location>
        <position position="376"/>
    </location>
    <ligand>
        <name>acetyl-CoA</name>
        <dbReference type="ChEBI" id="CHEBI:57288"/>
    </ligand>
</feature>
<feature type="binding site" evidence="1">
    <location>
        <position position="419"/>
    </location>
    <ligand>
        <name>acetyl-CoA</name>
        <dbReference type="ChEBI" id="CHEBI:57288"/>
    </ligand>
</feature>
<feature type="binding site" evidence="1">
    <location>
        <position position="436"/>
    </location>
    <ligand>
        <name>acetyl-CoA</name>
        <dbReference type="ChEBI" id="CHEBI:57288"/>
    </ligand>
</feature>
<organism>
    <name type="scientific">Prochlorococcus marinus (strain MIT 9211)</name>
    <dbReference type="NCBI Taxonomy" id="93059"/>
    <lineage>
        <taxon>Bacteria</taxon>
        <taxon>Bacillati</taxon>
        <taxon>Cyanobacteriota</taxon>
        <taxon>Cyanophyceae</taxon>
        <taxon>Synechococcales</taxon>
        <taxon>Prochlorococcaceae</taxon>
        <taxon>Prochlorococcus</taxon>
    </lineage>
</organism>
<comment type="function">
    <text evidence="1">Catalyzes the last two sequential reactions in the de novo biosynthetic pathway for UDP-N-acetylglucosamine (UDP-GlcNAc). The C-terminal domain catalyzes the transfer of acetyl group from acetyl coenzyme A to glucosamine-1-phosphate (GlcN-1-P) to produce N-acetylglucosamine-1-phosphate (GlcNAc-1-P), which is converted into UDP-GlcNAc by the transfer of uridine 5-monophosphate (from uridine 5-triphosphate), a reaction catalyzed by the N-terminal domain.</text>
</comment>
<comment type="catalytic activity">
    <reaction evidence="1">
        <text>alpha-D-glucosamine 1-phosphate + acetyl-CoA = N-acetyl-alpha-D-glucosamine 1-phosphate + CoA + H(+)</text>
        <dbReference type="Rhea" id="RHEA:13725"/>
        <dbReference type="ChEBI" id="CHEBI:15378"/>
        <dbReference type="ChEBI" id="CHEBI:57287"/>
        <dbReference type="ChEBI" id="CHEBI:57288"/>
        <dbReference type="ChEBI" id="CHEBI:57776"/>
        <dbReference type="ChEBI" id="CHEBI:58516"/>
        <dbReference type="EC" id="2.3.1.157"/>
    </reaction>
</comment>
<comment type="catalytic activity">
    <reaction evidence="1">
        <text>N-acetyl-alpha-D-glucosamine 1-phosphate + UTP + H(+) = UDP-N-acetyl-alpha-D-glucosamine + diphosphate</text>
        <dbReference type="Rhea" id="RHEA:13509"/>
        <dbReference type="ChEBI" id="CHEBI:15378"/>
        <dbReference type="ChEBI" id="CHEBI:33019"/>
        <dbReference type="ChEBI" id="CHEBI:46398"/>
        <dbReference type="ChEBI" id="CHEBI:57705"/>
        <dbReference type="ChEBI" id="CHEBI:57776"/>
        <dbReference type="EC" id="2.7.7.23"/>
    </reaction>
</comment>
<comment type="cofactor">
    <cofactor evidence="1">
        <name>Mg(2+)</name>
        <dbReference type="ChEBI" id="CHEBI:18420"/>
    </cofactor>
    <text evidence="1">Binds 1 Mg(2+) ion per subunit.</text>
</comment>
<comment type="pathway">
    <text evidence="1">Nucleotide-sugar biosynthesis; UDP-N-acetyl-alpha-D-glucosamine biosynthesis; N-acetyl-alpha-D-glucosamine 1-phosphate from alpha-D-glucosamine 6-phosphate (route II): step 2/2.</text>
</comment>
<comment type="pathway">
    <text evidence="1">Nucleotide-sugar biosynthesis; UDP-N-acetyl-alpha-D-glucosamine biosynthesis; UDP-N-acetyl-alpha-D-glucosamine from N-acetyl-alpha-D-glucosamine 1-phosphate: step 1/1.</text>
</comment>
<comment type="pathway">
    <text evidence="1">Bacterial outer membrane biogenesis; LPS lipid A biosynthesis.</text>
</comment>
<comment type="subunit">
    <text evidence="1">Homotrimer.</text>
</comment>
<comment type="subcellular location">
    <subcellularLocation>
        <location evidence="1">Cytoplasm</location>
    </subcellularLocation>
</comment>
<comment type="similarity">
    <text evidence="1">In the N-terminal section; belongs to the N-acetylglucosamine-1-phosphate uridyltransferase family.</text>
</comment>
<comment type="similarity">
    <text evidence="1">In the C-terminal section; belongs to the transferase hexapeptide repeat family.</text>
</comment>
<reference key="1">
    <citation type="journal article" date="2007" name="PLoS Genet.">
        <title>Patterns and implications of gene gain and loss in the evolution of Prochlorococcus.</title>
        <authorList>
            <person name="Kettler G.C."/>
            <person name="Martiny A.C."/>
            <person name="Huang K."/>
            <person name="Zucker J."/>
            <person name="Coleman M.L."/>
            <person name="Rodrigue S."/>
            <person name="Chen F."/>
            <person name="Lapidus A."/>
            <person name="Ferriera S."/>
            <person name="Johnson J."/>
            <person name="Steglich C."/>
            <person name="Church G.M."/>
            <person name="Richardson P."/>
            <person name="Chisholm S.W."/>
        </authorList>
    </citation>
    <scope>NUCLEOTIDE SEQUENCE [LARGE SCALE GENOMIC DNA]</scope>
    <source>
        <strain>MIT 9211</strain>
    </source>
</reference>
<keyword id="KW-0012">Acyltransferase</keyword>
<keyword id="KW-0133">Cell shape</keyword>
<keyword id="KW-0961">Cell wall biogenesis/degradation</keyword>
<keyword id="KW-0963">Cytoplasm</keyword>
<keyword id="KW-0460">Magnesium</keyword>
<keyword id="KW-0479">Metal-binding</keyword>
<keyword id="KW-0511">Multifunctional enzyme</keyword>
<keyword id="KW-0548">Nucleotidyltransferase</keyword>
<keyword id="KW-0573">Peptidoglycan synthesis</keyword>
<keyword id="KW-1185">Reference proteome</keyword>
<keyword id="KW-0677">Repeat</keyword>
<keyword id="KW-0808">Transferase</keyword>